<comment type="function">
    <text>TS is a member of the terpene cyclase group of enzymes. It catalyzes the isomerization and cyclization of farnesyl pyro-phosphate to form trichodiene, the first cyclic intermediate in the biosynthetic pathway for trichothecenes. It serves to branch trichothecene biosynthesis from the isoprenoid pathway.</text>
</comment>
<comment type="catalytic activity">
    <reaction>
        <text>(2E,6E)-farnesyl diphosphate = trichodiene + diphosphate</text>
        <dbReference type="Rhea" id="RHEA:12052"/>
        <dbReference type="ChEBI" id="CHEBI:15861"/>
        <dbReference type="ChEBI" id="CHEBI:33019"/>
        <dbReference type="ChEBI" id="CHEBI:175763"/>
        <dbReference type="EC" id="4.2.3.6"/>
    </reaction>
</comment>
<comment type="pathway">
    <text>Sesquiterpene biosynthesis; trichothecene biosynthesis.</text>
</comment>
<comment type="miscellaneous">
    <text>Trichothecenes are sesquiterpenoid toxins that act by inhibiting protein biosynthesis.</text>
</comment>
<comment type="similarity">
    <text evidence="1">Belongs to the trichodiene synthase family.</text>
</comment>
<accession>Q8NIC1</accession>
<proteinExistence type="inferred from homology"/>
<name>TRI5_FUSCE</name>
<gene>
    <name type="primary">TRI5</name>
</gene>
<dbReference type="EC" id="4.2.3.6"/>
<dbReference type="EMBL" id="AY102569">
    <property type="protein sequence ID" value="AAM48766.1"/>
    <property type="molecule type" value="Genomic_DNA"/>
</dbReference>
<dbReference type="EMBL" id="AY102572">
    <property type="protein sequence ID" value="AAM48790.1"/>
    <property type="molecule type" value="Genomic_DNA"/>
</dbReference>
<dbReference type="EMBL" id="AY102574">
    <property type="protein sequence ID" value="AAM48806.1"/>
    <property type="molecule type" value="Genomic_DNA"/>
</dbReference>
<dbReference type="SMR" id="Q8NIC1"/>
<dbReference type="UniPathway" id="UPA00267"/>
<dbReference type="GO" id="GO:0045482">
    <property type="term" value="F:trichodiene synthase activity"/>
    <property type="evidence" value="ECO:0007669"/>
    <property type="project" value="UniProtKB-EC"/>
</dbReference>
<dbReference type="GO" id="GO:0016106">
    <property type="term" value="P:sesquiterpenoid biosynthetic process"/>
    <property type="evidence" value="ECO:0007669"/>
    <property type="project" value="InterPro"/>
</dbReference>
<dbReference type="Gene3D" id="1.10.600.10">
    <property type="entry name" value="Farnesyl Diphosphate Synthase"/>
    <property type="match status" value="1"/>
</dbReference>
<dbReference type="InterPro" id="IPR008949">
    <property type="entry name" value="Isoprenoid_synthase_dom_sf"/>
</dbReference>
<dbReference type="InterPro" id="IPR010458">
    <property type="entry name" value="TRI5_ascomyc"/>
</dbReference>
<dbReference type="InterPro" id="IPR024652">
    <property type="entry name" value="Trichodiene_synth"/>
</dbReference>
<dbReference type="Pfam" id="PF06330">
    <property type="entry name" value="TRI5"/>
    <property type="match status" value="1"/>
</dbReference>
<dbReference type="PIRSF" id="PIRSF001388">
    <property type="entry name" value="TRI5"/>
    <property type="match status" value="1"/>
</dbReference>
<dbReference type="SFLD" id="SFLDS00005">
    <property type="entry name" value="Isoprenoid_Synthase_Type_I"/>
    <property type="match status" value="1"/>
</dbReference>
<dbReference type="SFLD" id="SFLDG01021">
    <property type="entry name" value="Trichodiene_Synthase_Like"/>
    <property type="match status" value="1"/>
</dbReference>
<dbReference type="SUPFAM" id="SSF48576">
    <property type="entry name" value="Terpenoid synthases"/>
    <property type="match status" value="1"/>
</dbReference>
<reference key="1">
    <citation type="journal article" date="2002" name="Proc. Natl. Acad. Sci. U.S.A.">
        <title>Ancestral polymorphism and adaptive evolution in the trichothecene mycotoxin gene cluster of phytopathogenic Fusarium.</title>
        <authorList>
            <person name="Ward T.J."/>
            <person name="Bielawski J.P."/>
            <person name="Kistler H.C."/>
            <person name="Sullivan E."/>
            <person name="O'Donnell K."/>
        </authorList>
    </citation>
    <scope>NUCLEOTIDE SEQUENCE [GENOMIC DNA]</scope>
    <source>
        <strain>ATCC 66007 / CBS 110268 / KF-748 / NRRL 13721</strain>
        <strain>CBS 195.80 / IMI 322100 / NRRL 25805</strain>
        <strain>CBS 589.93 / NRRL 25491</strain>
    </source>
</reference>
<evidence type="ECO:0000305" key="1"/>
<keyword id="KW-0456">Lyase</keyword>
<organism>
    <name type="scientific">Fusarium cerealis</name>
    <name type="common">Fusarium crookwellense</name>
    <dbReference type="NCBI Taxonomy" id="56641"/>
    <lineage>
        <taxon>Eukaryota</taxon>
        <taxon>Fungi</taxon>
        <taxon>Dikarya</taxon>
        <taxon>Ascomycota</taxon>
        <taxon>Pezizomycotina</taxon>
        <taxon>Sordariomycetes</taxon>
        <taxon>Hypocreomycetidae</taxon>
        <taxon>Hypocreales</taxon>
        <taxon>Nectriaceae</taxon>
        <taxon>Fusarium</taxon>
    </lineage>
</organism>
<feature type="chain" id="PRO_0000221577" description="Trichodiene synthase">
    <location>
        <begin position="1"/>
        <end position="375"/>
    </location>
</feature>
<protein>
    <recommendedName>
        <fullName>Trichodiene synthase</fullName>
        <ecNumber>4.2.3.6</ecNumber>
    </recommendedName>
    <alternativeName>
        <fullName>Sesquiterpene cyclase</fullName>
        <shortName>TS</shortName>
    </alternativeName>
</protein>
<sequence length="375" mass="43853">MENFPTEYFLNTSVRLLEYIRYRDSNYTREERIENLHYAYNKAAHHFAQPRQQKMLKVDPKRLQASLQTIVGMVVYSWAKVSKECMADLSIHYTYTLVLDDSSDDPHPAMVNYFDDLQAGREQAHPWWALVNEHFPNVLRHFGPFCSLNLIRSTMDFFEGCWIEQYNFGGFPGSDDYPQFLRRMNGLGHCVGASLWPKDLFDERKNFLEITTAVAQMENWMVWVNDLMSFYKEFDDERDQISLVKNFVTCHEITLDEALEKLTQETLHSSKQMVAVFADKDPQVMDTIECFMHGYVTWHLCDARYRLHEIYEKVKDQDTEDAKKFCKFFEQAANVGAVAASEWAYPPVAQLANVRAKSDVKEAQKPFLSSIELVE</sequence>